<dbReference type="EMBL" id="DQ197228">
    <property type="protein sequence ID" value="ABA61563.1"/>
    <property type="molecule type" value="Genomic_DNA"/>
</dbReference>
<dbReference type="GO" id="GO:0009507">
    <property type="term" value="C:chloroplast"/>
    <property type="evidence" value="ECO:0007669"/>
    <property type="project" value="UniProtKB-SubCell"/>
</dbReference>
<dbReference type="GO" id="GO:0003723">
    <property type="term" value="F:RNA binding"/>
    <property type="evidence" value="ECO:0007669"/>
    <property type="project" value="UniProtKB-KW"/>
</dbReference>
<dbReference type="GO" id="GO:0006397">
    <property type="term" value="P:mRNA processing"/>
    <property type="evidence" value="ECO:0007669"/>
    <property type="project" value="UniProtKB-KW"/>
</dbReference>
<dbReference type="GO" id="GO:0008380">
    <property type="term" value="P:RNA splicing"/>
    <property type="evidence" value="ECO:0007669"/>
    <property type="project" value="UniProtKB-UniRule"/>
</dbReference>
<dbReference type="GO" id="GO:0008033">
    <property type="term" value="P:tRNA processing"/>
    <property type="evidence" value="ECO:0007669"/>
    <property type="project" value="UniProtKB-KW"/>
</dbReference>
<dbReference type="HAMAP" id="MF_01390">
    <property type="entry name" value="MatK"/>
    <property type="match status" value="1"/>
</dbReference>
<dbReference type="InterPro" id="IPR024937">
    <property type="entry name" value="Domain_X"/>
</dbReference>
<dbReference type="InterPro" id="IPR002866">
    <property type="entry name" value="Maturase_MatK"/>
</dbReference>
<dbReference type="InterPro" id="IPR024942">
    <property type="entry name" value="Maturase_MatK_N"/>
</dbReference>
<dbReference type="PANTHER" id="PTHR34811">
    <property type="entry name" value="MATURASE K"/>
    <property type="match status" value="1"/>
</dbReference>
<dbReference type="PANTHER" id="PTHR34811:SF1">
    <property type="entry name" value="MATURASE K"/>
    <property type="match status" value="1"/>
</dbReference>
<dbReference type="Pfam" id="PF01348">
    <property type="entry name" value="Intron_maturas2"/>
    <property type="match status" value="1"/>
</dbReference>
<dbReference type="Pfam" id="PF01824">
    <property type="entry name" value="MatK_N"/>
    <property type="match status" value="1"/>
</dbReference>
<feature type="chain" id="PRO_0000143367" description="Maturase K">
    <location>
        <begin position="1"/>
        <end position="502"/>
    </location>
</feature>
<sequence length="502" mass="59222">MEEIQRYLQLDRSQQHDCLYPLIFQEYIYALAHDHGLNRSILLENPGYDNKSSLLIVKRLITRMYQQNHFFISVNDSNQDQFFGRNKNLYSQMISEGFAFIVEMTFSLRLISSLEGKEIFKSHNLRSIHSIFPFLEDNFSHLNCVLDILIPHPVHPEILVQTLRFWVKDASSLHLLRFFLHEYWNNLITLKKPSSSFSKRNQRLFFFLYNSHVCEYESIFVFLRNQSSHLRSTSFGALLERIYFYGKIERLVEVFAKDFQATLWLFKDPFIHYVRYQGKLILASKGTPLLMNKWKYYLVNFWQCYFYLWSRPGRIYINQLSNHSLDFMGYLSSVRLNPSMVRSQMLENAFLVNNVIKKFDTLLPIIPLIGSLAKAKFCNILGNPISKPVRADLSDSDIIDRFGRICRNLSHYHSGSSKKKSLYRIKYILRLSCAKTLARKHKSSVRAFLKRFGSGLLEEFLTSEEQVLSLTFPRASSTLWGVYRSRIWYLDIICINDLANHQ</sequence>
<comment type="function">
    <text evidence="1">Usually encoded in the trnK tRNA gene intron. Probably assists in splicing its own and other chloroplast group II introns.</text>
</comment>
<comment type="subcellular location">
    <subcellularLocation>
        <location>Plastid</location>
        <location>Chloroplast</location>
    </subcellularLocation>
</comment>
<comment type="similarity">
    <text evidence="1">Belongs to the intron maturase 2 family. MatK subfamily.</text>
</comment>
<accession>Q3HT77</accession>
<proteinExistence type="inferred from homology"/>
<organism>
    <name type="scientific">Ehretia anacua</name>
    <name type="common">Sandpaper tree</name>
    <name type="synonym">Gaza anacua</name>
    <dbReference type="NCBI Taxonomy" id="99303"/>
    <lineage>
        <taxon>Eukaryota</taxon>
        <taxon>Viridiplantae</taxon>
        <taxon>Streptophyta</taxon>
        <taxon>Embryophyta</taxon>
        <taxon>Tracheophyta</taxon>
        <taxon>Spermatophyta</taxon>
        <taxon>Magnoliopsida</taxon>
        <taxon>eudicotyledons</taxon>
        <taxon>Gunneridae</taxon>
        <taxon>Pentapetalae</taxon>
        <taxon>asterids</taxon>
        <taxon>lamiids</taxon>
        <taxon>Boraginales</taxon>
        <taxon>Ehretiaceae</taxon>
        <taxon>Ehretia</taxon>
    </lineage>
</organism>
<protein>
    <recommendedName>
        <fullName evidence="1">Maturase K</fullName>
    </recommendedName>
    <alternativeName>
        <fullName evidence="1">Intron maturase</fullName>
    </alternativeName>
</protein>
<gene>
    <name evidence="1" type="primary">matK</name>
</gene>
<geneLocation type="chloroplast"/>
<reference key="1">
    <citation type="journal article" date="2006" name="Mol. Phylogenet. Evol.">
        <title>Molecular evidence for the age, origin, and evolutionary history of the American desert plant genus Tiquilia (Boraginaceae).</title>
        <authorList>
            <person name="Moore M.J."/>
            <person name="Jansen R.K."/>
        </authorList>
    </citation>
    <scope>NUCLEOTIDE SEQUENCE [GENOMIC DNA]</scope>
</reference>
<name>MATK_EHRAN</name>
<evidence type="ECO:0000255" key="1">
    <source>
        <dbReference type="HAMAP-Rule" id="MF_01390"/>
    </source>
</evidence>
<keyword id="KW-0150">Chloroplast</keyword>
<keyword id="KW-0507">mRNA processing</keyword>
<keyword id="KW-0934">Plastid</keyword>
<keyword id="KW-0694">RNA-binding</keyword>
<keyword id="KW-0819">tRNA processing</keyword>